<name>ENV_EIAV9</name>
<reference key="1">
    <citation type="journal article" date="1987" name="Virology">
        <title>Nucleotide sequence analysis of equine infectious anemia virus proviral DNA.</title>
        <authorList>
            <person name="Kawakami T."/>
            <person name="Sherman L."/>
            <person name="Dahlberg J."/>
            <person name="Gazit A."/>
            <person name="Yaniv A."/>
            <person name="Tronick S.R."/>
            <person name="Aaronson S.A."/>
        </authorList>
    </citation>
    <scope>NUCLEOTIDE SEQUENCE [GENOMIC RNA]</scope>
</reference>
<reference key="2">
    <citation type="submission" date="1987-11" db="EMBL/GenBank/DDBJ databases">
        <authorList>
            <person name="Tronick S.R."/>
        </authorList>
    </citation>
    <scope>SEQUENCE REVISION TO N-TERMINUS</scope>
</reference>
<gene>
    <name type="primary">env</name>
</gene>
<proteinExistence type="inferred from homology"/>
<sequence length="859" mass="97113">MVSIAFYGGIPGGISTPITQQSEKSKCEENTMFQPYCYNNDSKNSMAESKEARDQEMNLKEESKEEKRRNDWWKIGMFLLCLAGTTGGILWWYEGLPQQHYIGLVAIGGRLNGSGQSNAIECWGSFPGCRPFQNYFSYETNRSMHMDNNTATLLEAYHREITFIYKSSCTDSDHCQEYQCKKVNLNSSDSSNSVRVEDVTNTAEYWGFKWLECNQTENFKTILVPENEMVNINDTDTWIPKGCNETWARVKRCPIDILYGIHPIRLCVQPPFFLVQEKGIADTSRIGNCGPTIFLGVLEDNKGVVRGDYTACNVRRLNINRKDYTGIYQVPIFYTCTFTNITSCNNEPIISVIMYETNQVQYLLCNNNNSNNYNCVVQSFGVIGQAHLELPRPNKRIRNQSFNQYNCSINNKTELETWKLVKTSGVTPLPISSEANTGLIRHKRDFGISAIVAAIVAATAIAASATMSYVALTEVNKIMEVQNHTFEVENSTLNGMDLIERQIKILYAMILQTHADVQLLKERQQVEETFNLIGCIERTHVFCHTGHPWNMSWGHLNESTQWDDWVSKMEDLNQEILTTLHGARNNLAQSMITFNTPDSIAQFGKDLWSHIGNWIPGLGASIIKYIVMFLLIYLLLTSSPKILRALWKVTSGAGSSGSRYLKKKFHHKHASREDTWDQAQHNIHLAGVTGGSGDKYYKQKYSRNDWNGESEEYNRRPKSWVKSIEAFGESYISEKTKGEISQPGAAINEHKNGSGGNNPHQGSLDLEIRSEGGNIYDCCIKAQEGTLAIPCCGFPLWLFWGLVIIVGRIAGYGLRGLAVIIRICIRGLNLIFEIIRKMLDYIGRALNPGTSHVSMPQYV</sequence>
<accession>P11306</accession>
<organism>
    <name type="scientific">Equine infectious anemia virus (isolate 1369)</name>
    <name type="common">EIAV</name>
    <dbReference type="NCBI Taxonomy" id="11670"/>
    <lineage>
        <taxon>Viruses</taxon>
        <taxon>Riboviria</taxon>
        <taxon>Pararnavirae</taxon>
        <taxon>Artverviricota</taxon>
        <taxon>Revtraviricetes</taxon>
        <taxon>Ortervirales</taxon>
        <taxon>Retroviridae</taxon>
        <taxon>Orthoretrovirinae</taxon>
        <taxon>Lentivirus</taxon>
        <taxon>Equine infectious anemia virus</taxon>
    </lineage>
</organism>
<comment type="function">
    <text evidence="1">The surface protein (SU) attaches the virus to the host cell by binding to its receptor. This interaction triggers the refolding of the transmembrane protein (TM) and is thought to activate its fusogenic potential by unmasking its fusion peptide. Fusion occurs at the host cell plasma membrane (By similarity).</text>
</comment>
<comment type="function">
    <text evidence="1">The transmembrane protein (TM) acts as a class I viral fusion protein. Under the current model, the protein has at least 3 conformational states: pre-fusion native state, pre-hairpin intermediate state, and post-fusion hairpin state. During viral and target cell membrane fusion, the coiled coil regions (heptad repeats) assume a trimer-of-hairpins structure, positioning the fusion peptide in close proximity to the C-terminal region of the ectodomain. The formation of this structure appears to drive apposition and subsequent fusion of viral and target cell membranes. Membranes fusion leads to delivery of the nucleocapsid into the cytoplasm (By similarity).</text>
</comment>
<comment type="subunit">
    <text evidence="1">The mature envelope protein (Env) consists of a trimer of SU-TM heterodimers attached by noncovalent interactions or by a labile interchain disulfide bond.</text>
</comment>
<comment type="subcellular location">
    <molecule>Transmembrane protein</molecule>
    <subcellularLocation>
        <location evidence="1">Virion membrane</location>
        <topology evidence="1">Single-pass type I membrane protein</topology>
    </subcellularLocation>
    <subcellularLocation>
        <location evidence="1">Host cell membrane</location>
        <topology evidence="1">Single-pass type I membrane protein</topology>
    </subcellularLocation>
    <text evidence="1">It is probably concentrated at the site of budding and incorporated into the virions possibly by contacts between the cytoplasmic tail of Env and the N-terminus of Gag.</text>
</comment>
<comment type="subcellular location">
    <molecule>Surface protein</molecule>
    <subcellularLocation>
        <location evidence="1">Virion membrane</location>
        <topology evidence="1">Peripheral membrane protein</topology>
    </subcellularLocation>
    <subcellularLocation>
        <location evidence="1">Host cell membrane</location>
        <topology evidence="1">Peripheral membrane protein</topology>
    </subcellularLocation>
    <text evidence="1">The surface protein is not anchored to the viral envelope, but associates with the extravirion surface through its binding to TM. It is probably concentrated at the site of budding and incorporated into the virions possibly by contacts between the cytoplasmic tail of Env and the N-terminus of Gag (By similarity).</text>
</comment>
<comment type="PTM">
    <text evidence="1">Specific enzymatic cleavages in vivo yield mature proteins. Envelope glycoproteins are synthesized as an inactive precursor that is N-glycosylated and processed likely by host cell furin or by a furin-like protease in the Golgi to yield the mature SU and TM proteins. The cleavage site between SU and TM requires the minimal sequence [KR]-X-[KR]-R (By similarity).</text>
</comment>
<evidence type="ECO:0000250" key="1"/>
<evidence type="ECO:0000255" key="2"/>
<feature type="propeptide" id="PRO_0000239526" evidence="1">
    <location>
        <begin position="1"/>
        <end position="6"/>
    </location>
</feature>
<feature type="chain" id="PRO_0000038699" description="Envelope glycoprotein">
    <location>
        <begin position="7"/>
        <end position="859"/>
    </location>
</feature>
<feature type="chain" id="PRO_0000038700" description="Surface protein" evidence="1">
    <location>
        <begin position="7"/>
        <end position="444"/>
    </location>
</feature>
<feature type="chain" id="PRO_0000038701" description="Transmembrane protein" evidence="1">
    <location>
        <begin position="445"/>
        <end position="859"/>
    </location>
</feature>
<feature type="topological domain" description="Extracellular" evidence="2">
    <location>
        <begin position="7"/>
        <end position="614"/>
    </location>
</feature>
<feature type="transmembrane region" description="Helical" evidence="2">
    <location>
        <begin position="615"/>
        <end position="635"/>
    </location>
</feature>
<feature type="topological domain" description="Cytoplasmic" evidence="2">
    <location>
        <begin position="636"/>
        <end position="859"/>
    </location>
</feature>
<feature type="region of interest" description="Fusion peptide" evidence="2">
    <location>
        <begin position="446"/>
        <end position="466"/>
    </location>
</feature>
<feature type="region of interest" description="Immunosuppression" evidence="1">
    <location>
        <begin position="498"/>
        <end position="513"/>
    </location>
</feature>
<feature type="coiled-coil region" evidence="2">
    <location>
        <begin position="576"/>
        <end position="624"/>
    </location>
</feature>
<feature type="coiled-coil region" evidence="2">
    <location>
        <begin position="663"/>
        <end position="699"/>
    </location>
</feature>
<feature type="site" description="Cleavage; by host" evidence="1">
    <location>
        <begin position="444"/>
        <end position="445"/>
    </location>
</feature>
<feature type="site" description="Cleavage" evidence="1">
    <location>
        <begin position="684"/>
        <end position="685"/>
    </location>
</feature>
<feature type="glycosylation site" description="N-linked (GlcNAc...) asparagine; by host" evidence="2">
    <location>
        <position position="40"/>
    </location>
</feature>
<feature type="glycosylation site" description="N-linked (GlcNAc...) asparagine; by host" evidence="2">
    <location>
        <position position="112"/>
    </location>
</feature>
<feature type="glycosylation site" description="N-linked (GlcNAc...) asparagine; by host" evidence="2">
    <location>
        <position position="141"/>
    </location>
</feature>
<feature type="glycosylation site" description="N-linked (GlcNAc...) asparagine; by host" evidence="2">
    <location>
        <position position="148"/>
    </location>
</feature>
<feature type="glycosylation site" description="N-linked (GlcNAc...) asparagine; by host" evidence="2">
    <location>
        <position position="186"/>
    </location>
</feature>
<feature type="glycosylation site" description="N-linked (GlcNAc...) asparagine; by host" evidence="2">
    <location>
        <position position="214"/>
    </location>
</feature>
<feature type="glycosylation site" description="N-linked (GlcNAc...) asparagine; by host" evidence="2">
    <location>
        <position position="233"/>
    </location>
</feature>
<feature type="glycosylation site" description="N-linked (GlcNAc...) asparagine; by host" evidence="2">
    <location>
        <position position="244"/>
    </location>
</feature>
<feature type="glycosylation site" description="N-linked (GlcNAc...) asparagine; by host" evidence="2">
    <location>
        <position position="340"/>
    </location>
</feature>
<feature type="glycosylation site" description="N-linked (GlcNAc...) asparagine; by host" evidence="2">
    <location>
        <position position="368"/>
    </location>
</feature>
<feature type="glycosylation site" description="N-linked (GlcNAc...) asparagine; by host" evidence="2">
    <location>
        <position position="399"/>
    </location>
</feature>
<feature type="glycosylation site" description="N-linked (GlcNAc...) asparagine; by host" evidence="2">
    <location>
        <position position="406"/>
    </location>
</feature>
<feature type="glycosylation site" description="N-linked (GlcNAc...) asparagine; by host" evidence="2">
    <location>
        <position position="411"/>
    </location>
</feature>
<feature type="glycosylation site" description="N-linked (GlcNAc...) asparagine; by host" evidence="2">
    <location>
        <position position="483"/>
    </location>
</feature>
<feature type="glycosylation site" description="N-linked (GlcNAc...) asparagine; by host" evidence="2">
    <location>
        <position position="490"/>
    </location>
</feature>
<feature type="glycosylation site" description="N-linked (GlcNAc...) asparagine; by host" evidence="2">
    <location>
        <position position="550"/>
    </location>
</feature>
<feature type="glycosylation site" description="N-linked (GlcNAc...) asparagine; by host" evidence="2">
    <location>
        <position position="557"/>
    </location>
</feature>
<organismHost>
    <name type="scientific">Equus asinus</name>
    <name type="common">Donkey</name>
    <name type="synonym">Equus africanus asinus</name>
    <dbReference type="NCBI Taxonomy" id="9793"/>
</organismHost>
<organismHost>
    <name type="scientific">Equus caballus</name>
    <name type="common">Horse</name>
    <dbReference type="NCBI Taxonomy" id="9796"/>
</organismHost>
<protein>
    <recommendedName>
        <fullName>Envelope glycoprotein</fullName>
    </recommendedName>
    <alternativeName>
        <fullName>Env polyprotein</fullName>
    </alternativeName>
    <component>
        <recommendedName>
            <fullName>Surface protein</fullName>
            <shortName>SU</shortName>
        </recommendedName>
        <alternativeName>
            <fullName>Glycoprotein 90</fullName>
            <shortName>gp90</shortName>
        </alternativeName>
    </component>
    <component>
        <recommendedName>
            <fullName>Transmembrane protein</fullName>
            <shortName>TM</shortName>
        </recommendedName>
        <alternativeName>
            <fullName>Glycoprotein 45</fullName>
            <shortName>gp45</shortName>
        </alternativeName>
    </component>
</protein>
<keyword id="KW-0165">Cleavage on pair of basic residues</keyword>
<keyword id="KW-0175">Coiled coil</keyword>
<keyword id="KW-1015">Disulfide bond</keyword>
<keyword id="KW-0325">Glycoprotein</keyword>
<keyword id="KW-1032">Host cell membrane</keyword>
<keyword id="KW-1043">Host membrane</keyword>
<keyword id="KW-0945">Host-virus interaction</keyword>
<keyword id="KW-0472">Membrane</keyword>
<keyword id="KW-0812">Transmembrane</keyword>
<keyword id="KW-1133">Transmembrane helix</keyword>
<keyword id="KW-1161">Viral attachment to host cell</keyword>
<keyword id="KW-0261">Viral envelope protein</keyword>
<keyword id="KW-0946">Virion</keyword>
<keyword id="KW-1160">Virus entry into host cell</keyword>
<dbReference type="EMBL" id="M16575">
    <property type="protein sequence ID" value="AAB59863.1"/>
    <property type="molecule type" value="Genomic_RNA"/>
</dbReference>
<dbReference type="PIR" id="C27842">
    <property type="entry name" value="VCLJEW"/>
</dbReference>
<dbReference type="GlyCosmos" id="P11306">
    <property type="glycosylation" value="17 sites, No reported glycans"/>
</dbReference>
<dbReference type="GO" id="GO:0020002">
    <property type="term" value="C:host cell plasma membrane"/>
    <property type="evidence" value="ECO:0007669"/>
    <property type="project" value="UniProtKB-SubCell"/>
</dbReference>
<dbReference type="GO" id="GO:0016020">
    <property type="term" value="C:membrane"/>
    <property type="evidence" value="ECO:0007669"/>
    <property type="project" value="UniProtKB-KW"/>
</dbReference>
<dbReference type="GO" id="GO:0019031">
    <property type="term" value="C:viral envelope"/>
    <property type="evidence" value="ECO:0007669"/>
    <property type="project" value="UniProtKB-KW"/>
</dbReference>
<dbReference type="GO" id="GO:0055036">
    <property type="term" value="C:virion membrane"/>
    <property type="evidence" value="ECO:0007669"/>
    <property type="project" value="UniProtKB-SubCell"/>
</dbReference>
<dbReference type="GO" id="GO:0005198">
    <property type="term" value="F:structural molecule activity"/>
    <property type="evidence" value="ECO:0007669"/>
    <property type="project" value="InterPro"/>
</dbReference>
<dbReference type="GO" id="GO:0046718">
    <property type="term" value="P:symbiont entry into host cell"/>
    <property type="evidence" value="ECO:0007669"/>
    <property type="project" value="UniProtKB-KW"/>
</dbReference>
<dbReference type="GO" id="GO:0019062">
    <property type="term" value="P:virion attachment to host cell"/>
    <property type="evidence" value="ECO:0007669"/>
    <property type="project" value="UniProtKB-KW"/>
</dbReference>
<dbReference type="CDD" id="cd09909">
    <property type="entry name" value="HIV-1-like_HR1-HR2"/>
    <property type="match status" value="1"/>
</dbReference>
<dbReference type="InterPro" id="IPR000328">
    <property type="entry name" value="GP41-like"/>
</dbReference>
<dbReference type="InterPro" id="IPR001361">
    <property type="entry name" value="Gp90_EIAV"/>
</dbReference>
<dbReference type="Pfam" id="PF00971">
    <property type="entry name" value="EIAV_GP90"/>
    <property type="match status" value="1"/>
</dbReference>
<dbReference type="Pfam" id="PF00517">
    <property type="entry name" value="GP41"/>
    <property type="match status" value="1"/>
</dbReference>